<gene>
    <name evidence="5" type="primary">nasD</name>
    <name evidence="9" type="synonym">fdx-niR</name>
    <name type="ordered locus">HFX_2005</name>
    <name type="ORF">C439_11803</name>
</gene>
<reference key="1">
    <citation type="journal article" date="2005" name="Gene">
        <title>Identification and transcriptional analysis of nitrate assimilation genes in the halophilic archaeon Haloferax mediterranei.</title>
        <authorList>
            <person name="Lledo B."/>
            <person name="Marhuenda-Egea F.C."/>
            <person name="Martinez-Espinosa R.M."/>
            <person name="Bonete M.J."/>
        </authorList>
    </citation>
    <scope>NUCLEOTIDE SEQUENCE [GENOMIC DNA]</scope>
    <scope>FUNCTION</scope>
    <scope>INDUCTION</scope>
    <scope>PATHWAY</scope>
    <source>
        <strain>ATCC 33500 / DSM 1411 / JCM 8866 / NBRC 14739 / NCIMB 2177 / R-4</strain>
    </source>
</reference>
<reference key="2">
    <citation type="journal article" date="2012" name="J. Bacteriol.">
        <title>Complete genome sequence of the metabolically versatile halophilic archaeon Haloferax mediterranei, a poly(3-hydroxybutyrate-co-3-hydroxyvalerate) producer.</title>
        <authorList>
            <person name="Han J."/>
            <person name="Zhang F."/>
            <person name="Hou J."/>
            <person name="Liu X."/>
            <person name="Li M."/>
            <person name="Liu H."/>
            <person name="Cai L."/>
            <person name="Zhang B."/>
            <person name="Chen Y."/>
            <person name="Zhou J."/>
            <person name="Hu S."/>
            <person name="Xiang H."/>
        </authorList>
    </citation>
    <scope>NUCLEOTIDE SEQUENCE [LARGE SCALE GENOMIC DNA]</scope>
    <source>
        <strain>ATCC 33500 / DSM 1411 / JCM 8866 / NBRC 14739 / NCIMB 2177 / R-4</strain>
    </source>
</reference>
<reference key="3">
    <citation type="journal article" date="2014" name="PLoS Genet.">
        <title>Phylogenetically driven sequencing of extremely halophilic archaea reveals strategies for static and dynamic osmo-response.</title>
        <authorList>
            <person name="Becker E.A."/>
            <person name="Seitzer P.M."/>
            <person name="Tritt A."/>
            <person name="Larsen D."/>
            <person name="Krusor M."/>
            <person name="Yao A.I."/>
            <person name="Wu D."/>
            <person name="Madern D."/>
            <person name="Eisen J.A."/>
            <person name="Darling A.E."/>
            <person name="Facciotti M.T."/>
        </authorList>
    </citation>
    <scope>NUCLEOTIDE SEQUENCE [LARGE SCALE GENOMIC DNA]</scope>
    <source>
        <strain>ATCC 33500 / DSM 1411 / JCM 8866 / NBRC 14739 / NCIMB 2177 / R-4</strain>
    </source>
</reference>
<reference key="4">
    <citation type="journal article" date="2001" name="FEMS Microbiol. Lett.">
        <title>Purification and characterisation of a possible assimilatory nitrite reductase from the halophile archaeon Haloferax mediterranei.</title>
        <authorList>
            <person name="Martinez-Espinosa R.M."/>
            <person name="Marhuenda-Egea F.C."/>
            <person name="Bonete M.J."/>
        </authorList>
    </citation>
    <scope>FUNCTION</scope>
    <scope>CATALYTIC ACTIVITY</scope>
    <scope>SUBSTRATE SPECIFICITY</scope>
    <scope>COFACTOR</scope>
    <scope>SUBUNIT</scope>
    <scope>ACTIVITY REGULATION</scope>
    <scope>BIOPHYSICOCHEMICAL PROPERTIES</scope>
</reference>
<accession>I3R637</accession>
<accession>Q703N2</accession>
<dbReference type="EC" id="1.7.7.1" evidence="3"/>
<dbReference type="EMBL" id="AJ621501">
    <property type="protein sequence ID" value="CAF19045.1"/>
    <property type="molecule type" value="Genomic_DNA"/>
</dbReference>
<dbReference type="EMBL" id="CP001868">
    <property type="protein sequence ID" value="AFK19697.1"/>
    <property type="molecule type" value="Genomic_DNA"/>
</dbReference>
<dbReference type="EMBL" id="AOLO01000009">
    <property type="protein sequence ID" value="EMA00019.1"/>
    <property type="molecule type" value="Genomic_DNA"/>
</dbReference>
<dbReference type="RefSeq" id="WP_004059343.1">
    <property type="nucleotide sequence ID" value="NC_017941.2"/>
</dbReference>
<dbReference type="SMR" id="I3R637"/>
<dbReference type="STRING" id="523841.HFX_2005"/>
<dbReference type="PaxDb" id="523841-HFX_2005"/>
<dbReference type="GeneID" id="40155085"/>
<dbReference type="KEGG" id="hme:HFX_2005"/>
<dbReference type="eggNOG" id="arCOG02055">
    <property type="taxonomic scope" value="Archaea"/>
</dbReference>
<dbReference type="HOGENOM" id="CLU_015667_2_3_2"/>
<dbReference type="OrthoDB" id="15347at2157"/>
<dbReference type="UniPathway" id="UPA00653"/>
<dbReference type="Proteomes" id="UP000006469">
    <property type="component" value="Chromosome"/>
</dbReference>
<dbReference type="Proteomes" id="UP000011603">
    <property type="component" value="Unassembled WGS sequence"/>
</dbReference>
<dbReference type="GO" id="GO:0051539">
    <property type="term" value="F:4 iron, 4 sulfur cluster binding"/>
    <property type="evidence" value="ECO:0007669"/>
    <property type="project" value="UniProtKB-KW"/>
</dbReference>
<dbReference type="GO" id="GO:0048307">
    <property type="term" value="F:ferredoxin-nitrite reductase activity"/>
    <property type="evidence" value="ECO:0007669"/>
    <property type="project" value="UniProtKB-EC"/>
</dbReference>
<dbReference type="GO" id="GO:0020037">
    <property type="term" value="F:heme binding"/>
    <property type="evidence" value="ECO:0007669"/>
    <property type="project" value="InterPro"/>
</dbReference>
<dbReference type="GO" id="GO:0046872">
    <property type="term" value="F:metal ion binding"/>
    <property type="evidence" value="ECO:0007669"/>
    <property type="project" value="UniProtKB-KW"/>
</dbReference>
<dbReference type="GO" id="GO:0016491">
    <property type="term" value="F:oxidoreductase activity"/>
    <property type="evidence" value="ECO:0000314"/>
    <property type="project" value="CACAO"/>
</dbReference>
<dbReference type="GO" id="GO:0042128">
    <property type="term" value="P:nitrate assimilation"/>
    <property type="evidence" value="ECO:0007669"/>
    <property type="project" value="UniProtKB-UniPathway"/>
</dbReference>
<dbReference type="Gene3D" id="3.90.480.20">
    <property type="match status" value="1"/>
</dbReference>
<dbReference type="Gene3D" id="3.30.413.10">
    <property type="entry name" value="Sulfite Reductase Hemoprotein, domain 1"/>
    <property type="match status" value="2"/>
</dbReference>
<dbReference type="InterPro" id="IPR051329">
    <property type="entry name" value="NIR_SIR_4Fe-4S"/>
</dbReference>
<dbReference type="InterPro" id="IPR005117">
    <property type="entry name" value="NiRdtase/SiRdtase_haem-b_fer"/>
</dbReference>
<dbReference type="InterPro" id="IPR036136">
    <property type="entry name" value="Nit/Sulf_reduc_fer-like_dom_sf"/>
</dbReference>
<dbReference type="InterPro" id="IPR006067">
    <property type="entry name" value="NO2/SO3_Rdtase_4Fe4S_dom"/>
</dbReference>
<dbReference type="InterPro" id="IPR045854">
    <property type="entry name" value="NO2/SO3_Rdtase_4Fe4S_sf"/>
</dbReference>
<dbReference type="InterPro" id="IPR006066">
    <property type="entry name" value="NO2/SO3_Rdtase_FeS/sirohaem_BS"/>
</dbReference>
<dbReference type="PANTHER" id="PTHR32439">
    <property type="entry name" value="FERREDOXIN--NITRITE REDUCTASE, CHLOROPLASTIC"/>
    <property type="match status" value="1"/>
</dbReference>
<dbReference type="PANTHER" id="PTHR32439:SF0">
    <property type="entry name" value="FERREDOXIN--NITRITE REDUCTASE, CHLOROPLASTIC"/>
    <property type="match status" value="1"/>
</dbReference>
<dbReference type="Pfam" id="PF01077">
    <property type="entry name" value="NIR_SIR"/>
    <property type="match status" value="2"/>
</dbReference>
<dbReference type="Pfam" id="PF03460">
    <property type="entry name" value="NIR_SIR_ferr"/>
    <property type="match status" value="2"/>
</dbReference>
<dbReference type="PRINTS" id="PR00397">
    <property type="entry name" value="SIROHAEM"/>
</dbReference>
<dbReference type="SUPFAM" id="SSF56014">
    <property type="entry name" value="Nitrite and sulphite reductase 4Fe-4S domain-like"/>
    <property type="match status" value="2"/>
</dbReference>
<dbReference type="SUPFAM" id="SSF55124">
    <property type="entry name" value="Nitrite/Sulfite reductase N-terminal domain-like"/>
    <property type="match status" value="2"/>
</dbReference>
<dbReference type="PROSITE" id="PS00365">
    <property type="entry name" value="NIR_SIR"/>
    <property type="match status" value="2"/>
</dbReference>
<comment type="function">
    <text evidence="3">Catalyzes the reduction of nitrite to ammonium in the nitrate assimilation pathway, using ferredoxin as the electron donor. Can use reduced methyl viologen but neither NADPH nor NADH as electron donors.</text>
</comment>
<comment type="catalytic activity">
    <reaction evidence="3">
        <text>6 oxidized [2Fe-2S]-[ferredoxin] + NH4(+) + 2 H2O = nitrite + 6 reduced [2Fe-2S]-[ferredoxin] + 8 H(+)</text>
        <dbReference type="Rhea" id="RHEA:18041"/>
        <dbReference type="Rhea" id="RHEA-COMP:10000"/>
        <dbReference type="Rhea" id="RHEA-COMP:10001"/>
        <dbReference type="ChEBI" id="CHEBI:15377"/>
        <dbReference type="ChEBI" id="CHEBI:15378"/>
        <dbReference type="ChEBI" id="CHEBI:16301"/>
        <dbReference type="ChEBI" id="CHEBI:28938"/>
        <dbReference type="ChEBI" id="CHEBI:33737"/>
        <dbReference type="ChEBI" id="CHEBI:33738"/>
        <dbReference type="EC" id="1.7.7.1"/>
    </reaction>
</comment>
<comment type="cofactor">
    <cofactor evidence="3">
        <name>siroheme</name>
        <dbReference type="ChEBI" id="CHEBI:60052"/>
    </cofactor>
    <text evidence="1">Binds 1 siroheme per subunit.</text>
</comment>
<comment type="cofactor">
    <cofactor evidence="7">
        <name>[4Fe-4S] cluster</name>
        <dbReference type="ChEBI" id="CHEBI:49883"/>
    </cofactor>
    <text>Binds 1 [4Fe-4S] cluster per subunit.</text>
</comment>
<comment type="activity regulation">
    <text evidence="3">Inhibited by cyanide and azide.</text>
</comment>
<comment type="biophysicochemical properties">
    <kinetics>
        <KM evidence="3">8.6 mM for nitrite</KM>
        <KM evidence="3">1.9 mM for methyl viologen</KM>
        <Vmax evidence="3">4.1 umol/min/mg enzyme with nitrite as substrate</Vmax>
        <Vmax evidence="3">1.7 umol/min/mg enzyme with methyl viologen as substrate</Vmax>
        <text>In the presence of 3.2 M NaCl.</text>
    </kinetics>
    <phDependence>
        <text evidence="3">Optimum pH is 7.5 at 60 degrees Celsius. At 40 degrees Celsius (temperature of the natural environment for H.mediterranei) the optimum pH is 6.5.</text>
    </phDependence>
    <temperatureDependence>
        <text evidence="3">Optimum temperature is 60 degrees Celsius.</text>
    </temperatureDependence>
</comment>
<comment type="pathway">
    <text evidence="8">Nitrogen metabolism; nitrate reduction (assimilation).</text>
</comment>
<comment type="subunit">
    <text evidence="3">Monomer.</text>
</comment>
<comment type="induction">
    <text evidence="4">Repressed by the presence of ammonium as nitrogen source.</text>
</comment>
<comment type="miscellaneous">
    <text evidence="3">Enzyme stability and activity depend upon the salt concentration.</text>
</comment>
<comment type="similarity">
    <text evidence="6">Belongs to the nitrite and sulfite reductase 4Fe-4S domain family.</text>
</comment>
<organism>
    <name type="scientific">Haloferax mediterranei (strain ATCC 33500 / DSM 1411 / JCM 8866 / NBRC 14739 / NCIMB 2177 / R-4)</name>
    <name type="common">Halobacterium mediterranei</name>
    <dbReference type="NCBI Taxonomy" id="523841"/>
    <lineage>
        <taxon>Archaea</taxon>
        <taxon>Methanobacteriati</taxon>
        <taxon>Methanobacteriota</taxon>
        <taxon>Stenosarchaea group</taxon>
        <taxon>Halobacteria</taxon>
        <taxon>Halobacteriales</taxon>
        <taxon>Haloferacaceae</taxon>
        <taxon>Haloferax</taxon>
    </lineage>
</organism>
<keyword id="KW-0004">4Fe-4S</keyword>
<keyword id="KW-0249">Electron transport</keyword>
<keyword id="KW-0349">Heme</keyword>
<keyword id="KW-0408">Iron</keyword>
<keyword id="KW-0411">Iron-sulfur</keyword>
<keyword id="KW-0479">Metal-binding</keyword>
<keyword id="KW-0534">Nitrate assimilation</keyword>
<keyword id="KW-0560">Oxidoreductase</keyword>
<keyword id="KW-0813">Transport</keyword>
<feature type="chain" id="PRO_0000428891" description="Assimilatory ferredoxin-dependent nitrite reductase">
    <location>
        <begin position="1"/>
        <end position="586"/>
    </location>
</feature>
<feature type="region of interest" description="Disordered" evidence="2">
    <location>
        <begin position="566"/>
        <end position="586"/>
    </location>
</feature>
<feature type="binding site" evidence="1">
    <location>
        <position position="411"/>
    </location>
    <ligand>
        <name>[4Fe-4S] cluster</name>
        <dbReference type="ChEBI" id="CHEBI:49883"/>
    </ligand>
</feature>
<feature type="binding site" evidence="1">
    <location>
        <position position="417"/>
    </location>
    <ligand>
        <name>[4Fe-4S] cluster</name>
        <dbReference type="ChEBI" id="CHEBI:49883"/>
    </ligand>
</feature>
<feature type="binding site" evidence="1">
    <location>
        <position position="455"/>
    </location>
    <ligand>
        <name>[4Fe-4S] cluster</name>
        <dbReference type="ChEBI" id="CHEBI:49883"/>
    </ligand>
</feature>
<feature type="binding site" evidence="1">
    <location>
        <position position="459"/>
    </location>
    <ligand>
        <name>[4Fe-4S] cluster</name>
        <dbReference type="ChEBI" id="CHEBI:49883"/>
    </ligand>
</feature>
<feature type="binding site" description="axial binding residue" evidence="1">
    <location>
        <position position="459"/>
    </location>
    <ligand>
        <name>siroheme</name>
        <dbReference type="ChEBI" id="CHEBI:60052"/>
    </ligand>
    <ligandPart>
        <name>Fe</name>
        <dbReference type="ChEBI" id="CHEBI:18248"/>
    </ligandPart>
</feature>
<feature type="sequence conflict" description="In Ref. 1; CAF19045." evidence="6" ref="1">
    <original>D</original>
    <variation>N</variation>
    <location>
        <position position="175"/>
    </location>
</feature>
<feature type="sequence conflict" description="In Ref. 1; CAF19045." evidence="6" ref="1">
    <original>LEPARKEVDGEVI</original>
    <variation>WNPPGKRSTERLF</variation>
    <location>
        <begin position="205"/>
        <end position="217"/>
    </location>
</feature>
<feature type="sequence conflict" description="In Ref. 1; CAF19045." evidence="6" ref="1">
    <original>K</original>
    <variation>Q</variation>
    <location>
        <position position="366"/>
    </location>
</feature>
<name>NASD_HALMT</name>
<proteinExistence type="evidence at protein level"/>
<sequence length="586" mass="65438">MASKKEQWKSDLYGDAVRDELEAFAEEGFESIPEDERDKWFTRFKFWGVFQQRTGQESYFMMRLTNANGVLEPGQLRTIAEVARDYATGPVDNPEFGNGWVDLTTRQSIQLHWLELEDIPEIWEQLESVGVTSRSAGGDTMRNITGCPVAGKDTHELVESKPLLDRFQSELREDDALSNMPRKFNISVTGCREGCAQDSINDIGLEPARKEVDGEVITGFNVRVGGGLGSRKPRVARSLDVFVADEERAYEVVRGFVELYHDHGNRDVRARARSRFFVDDWGTEKIRDRLESEYLDFELQSAGEDIRDEYTYNAGRPQSAGKSDHVGVHEQSDGRYYVGLSVAVGRLTAADALELADLADKYGSGKIRLTRRQNPIVMDVPAGALDDLLAEPLLSKHTPEPNPFQRGTVACTGTEFCSLALTETKARTARMLRWLRDNVEVPDDVHQLKIHYSGCTADCGQANTADIGLFGMRAQKDGEMVEAMDIGVGGGIGDEPSFVEWIHQRVPADEVPGAIASLVEAFAAHRTAGQTFRQWVEAEGPDAVAEYCEPIETDFEAPYMHDAKQSWYPFADEDEPPKTEQPMTSD</sequence>
<evidence type="ECO:0000250" key="1">
    <source>
        <dbReference type="UniProtKB" id="P9WJ03"/>
    </source>
</evidence>
<evidence type="ECO:0000256" key="2">
    <source>
        <dbReference type="SAM" id="MobiDB-lite"/>
    </source>
</evidence>
<evidence type="ECO:0000269" key="3">
    <source>
    </source>
</evidence>
<evidence type="ECO:0000269" key="4">
    <source>
    </source>
</evidence>
<evidence type="ECO:0000303" key="5">
    <source>
    </source>
</evidence>
<evidence type="ECO:0000305" key="6"/>
<evidence type="ECO:0000305" key="7">
    <source>
    </source>
</evidence>
<evidence type="ECO:0000305" key="8">
    <source>
    </source>
</evidence>
<evidence type="ECO:0000312" key="9">
    <source>
        <dbReference type="EMBL" id="CAF19045.1"/>
    </source>
</evidence>
<protein>
    <recommendedName>
        <fullName evidence="5">Assimilatory ferredoxin-dependent nitrite reductase</fullName>
        <shortName evidence="5">NiR</shortName>
        <ecNumber evidence="3">1.7.7.1</ecNumber>
    </recommendedName>
    <alternativeName>
        <fullName evidence="6">Ferredoxin:nitrite reductase</fullName>
    </alternativeName>
</protein>